<comment type="catalytic activity">
    <reaction evidence="1">
        <text>(R)-pantothenate + ATP = (R)-4'-phosphopantothenate + ADP + H(+)</text>
        <dbReference type="Rhea" id="RHEA:16373"/>
        <dbReference type="ChEBI" id="CHEBI:10986"/>
        <dbReference type="ChEBI" id="CHEBI:15378"/>
        <dbReference type="ChEBI" id="CHEBI:29032"/>
        <dbReference type="ChEBI" id="CHEBI:30616"/>
        <dbReference type="ChEBI" id="CHEBI:456216"/>
        <dbReference type="EC" id="2.7.1.33"/>
    </reaction>
</comment>
<comment type="pathway">
    <text evidence="1">Cofactor biosynthesis; coenzyme A biosynthesis; CoA from (R)-pantothenate: step 1/5.</text>
</comment>
<comment type="subcellular location">
    <subcellularLocation>
        <location evidence="1">Cytoplasm</location>
    </subcellularLocation>
</comment>
<comment type="similarity">
    <text evidence="1">Belongs to the prokaryotic pantothenate kinase family.</text>
</comment>
<protein>
    <recommendedName>
        <fullName evidence="1">Pantothenate kinase</fullName>
        <ecNumber evidence="1">2.7.1.33</ecNumber>
    </recommendedName>
    <alternativeName>
        <fullName evidence="1">Pantothenic acid kinase</fullName>
    </alternativeName>
</protein>
<feature type="chain" id="PRO_0000325542" description="Pantothenate kinase">
    <location>
        <begin position="1"/>
        <end position="323"/>
    </location>
</feature>
<feature type="binding site" evidence="1">
    <location>
        <begin position="101"/>
        <end position="108"/>
    </location>
    <ligand>
        <name>ATP</name>
        <dbReference type="ChEBI" id="CHEBI:30616"/>
    </ligand>
</feature>
<dbReference type="EC" id="2.7.1.33" evidence="1"/>
<dbReference type="EMBL" id="CP000474">
    <property type="protein sequence ID" value="ABM10005.1"/>
    <property type="molecule type" value="Genomic_DNA"/>
</dbReference>
<dbReference type="RefSeq" id="WP_011775550.1">
    <property type="nucleotide sequence ID" value="NC_008711.1"/>
</dbReference>
<dbReference type="SMR" id="A1R8P8"/>
<dbReference type="STRING" id="290340.AAur_2901"/>
<dbReference type="GeneID" id="92753791"/>
<dbReference type="KEGG" id="aau:AAur_2901"/>
<dbReference type="eggNOG" id="COG1072">
    <property type="taxonomic scope" value="Bacteria"/>
</dbReference>
<dbReference type="HOGENOM" id="CLU_053818_1_1_11"/>
<dbReference type="OrthoDB" id="1550976at2"/>
<dbReference type="UniPathway" id="UPA00241">
    <property type="reaction ID" value="UER00352"/>
</dbReference>
<dbReference type="Proteomes" id="UP000000637">
    <property type="component" value="Chromosome"/>
</dbReference>
<dbReference type="GO" id="GO:0005737">
    <property type="term" value="C:cytoplasm"/>
    <property type="evidence" value="ECO:0007669"/>
    <property type="project" value="UniProtKB-SubCell"/>
</dbReference>
<dbReference type="GO" id="GO:0005524">
    <property type="term" value="F:ATP binding"/>
    <property type="evidence" value="ECO:0007669"/>
    <property type="project" value="UniProtKB-UniRule"/>
</dbReference>
<dbReference type="GO" id="GO:0004594">
    <property type="term" value="F:pantothenate kinase activity"/>
    <property type="evidence" value="ECO:0007669"/>
    <property type="project" value="UniProtKB-UniRule"/>
</dbReference>
<dbReference type="GO" id="GO:0015937">
    <property type="term" value="P:coenzyme A biosynthetic process"/>
    <property type="evidence" value="ECO:0007669"/>
    <property type="project" value="UniProtKB-UniRule"/>
</dbReference>
<dbReference type="CDD" id="cd02025">
    <property type="entry name" value="PanK"/>
    <property type="match status" value="1"/>
</dbReference>
<dbReference type="Gene3D" id="3.40.50.300">
    <property type="entry name" value="P-loop containing nucleotide triphosphate hydrolases"/>
    <property type="match status" value="1"/>
</dbReference>
<dbReference type="HAMAP" id="MF_00215">
    <property type="entry name" value="Pantothen_kinase_1"/>
    <property type="match status" value="1"/>
</dbReference>
<dbReference type="InterPro" id="IPR027417">
    <property type="entry name" value="P-loop_NTPase"/>
</dbReference>
<dbReference type="InterPro" id="IPR004566">
    <property type="entry name" value="PanK"/>
</dbReference>
<dbReference type="InterPro" id="IPR006083">
    <property type="entry name" value="PRK/URK"/>
</dbReference>
<dbReference type="NCBIfam" id="TIGR00554">
    <property type="entry name" value="panK_bact"/>
    <property type="match status" value="1"/>
</dbReference>
<dbReference type="PANTHER" id="PTHR10285">
    <property type="entry name" value="URIDINE KINASE"/>
    <property type="match status" value="1"/>
</dbReference>
<dbReference type="Pfam" id="PF00485">
    <property type="entry name" value="PRK"/>
    <property type="match status" value="1"/>
</dbReference>
<dbReference type="PIRSF" id="PIRSF000545">
    <property type="entry name" value="Pantothenate_kin"/>
    <property type="match status" value="1"/>
</dbReference>
<dbReference type="SUPFAM" id="SSF52540">
    <property type="entry name" value="P-loop containing nucleoside triphosphate hydrolases"/>
    <property type="match status" value="1"/>
</dbReference>
<sequence>MSVTLQRTEANGDGASPFVELDRQTWSRLAAQMEQPLNEEDIFRLRGLGDPLDMKEVREVYLPLSRLLHLYVEASHQLHAATTTFLGEQTQRTPFVIGVAGSVAVGKSTIARVLREMLRRWPGTPNVELITTDGFLYPLAELKRRHLLERKGFPESYDRRGLLRFVSEVKGGAEEVRAPWYSHVTYDIVPGKEVVVRRPDVLIVEGLNVLAPARPRMDGKQGLAVSDFFDFSIYVDAKTSYIEEWYVDRFRKLRTTAFAQPESYFHRYATLSDDDAESTARGIWKRINEPNLEENVLPTRGRAQLVLTKDADHSIRRMLLRKV</sequence>
<proteinExistence type="inferred from homology"/>
<keyword id="KW-0067">ATP-binding</keyword>
<keyword id="KW-0173">Coenzyme A biosynthesis</keyword>
<keyword id="KW-0963">Cytoplasm</keyword>
<keyword id="KW-0418">Kinase</keyword>
<keyword id="KW-0547">Nucleotide-binding</keyword>
<keyword id="KW-0808">Transferase</keyword>
<accession>A1R8P8</accession>
<gene>
    <name evidence="1" type="primary">coaA</name>
    <name type="ordered locus">AAur_2901</name>
</gene>
<reference key="1">
    <citation type="journal article" date="2006" name="PLoS Genet.">
        <title>Secrets of soil survival revealed by the genome sequence of Arthrobacter aurescens TC1.</title>
        <authorList>
            <person name="Mongodin E.F."/>
            <person name="Shapir N."/>
            <person name="Daugherty S.C."/>
            <person name="DeBoy R.T."/>
            <person name="Emerson J.B."/>
            <person name="Shvartzbeyn A."/>
            <person name="Radune D."/>
            <person name="Vamathevan J."/>
            <person name="Riggs F."/>
            <person name="Grinberg V."/>
            <person name="Khouri H.M."/>
            <person name="Wackett L.P."/>
            <person name="Nelson K.E."/>
            <person name="Sadowsky M.J."/>
        </authorList>
    </citation>
    <scope>NUCLEOTIDE SEQUENCE [LARGE SCALE GENOMIC DNA]</scope>
    <source>
        <strain>TC1</strain>
    </source>
</reference>
<organism>
    <name type="scientific">Paenarthrobacter aurescens (strain TC1)</name>
    <dbReference type="NCBI Taxonomy" id="290340"/>
    <lineage>
        <taxon>Bacteria</taxon>
        <taxon>Bacillati</taxon>
        <taxon>Actinomycetota</taxon>
        <taxon>Actinomycetes</taxon>
        <taxon>Micrococcales</taxon>
        <taxon>Micrococcaceae</taxon>
        <taxon>Paenarthrobacter</taxon>
    </lineage>
</organism>
<evidence type="ECO:0000255" key="1">
    <source>
        <dbReference type="HAMAP-Rule" id="MF_00215"/>
    </source>
</evidence>
<name>COAA_PAEAT</name>